<reference key="1">
    <citation type="journal article" date="2004" name="Genome Res.">
        <title>The status, quality, and expansion of the NIH full-length cDNA project: the Mammalian Gene Collection (MGC).</title>
        <authorList>
            <consortium name="The MGC Project Team"/>
        </authorList>
    </citation>
    <scope>NUCLEOTIDE SEQUENCE [LARGE SCALE MRNA]</scope>
    <source>
        <tissue>Prostate</tissue>
    </source>
</reference>
<reference key="2">
    <citation type="journal article" date="2012" name="Mol. Cell">
        <title>Molecular machinery for insertion of tail-anchored membrane proteins into the endoplasmic reticulum membrane in mammalian cells.</title>
        <authorList>
            <person name="Yamamoto Y."/>
            <person name="Sakisaka T."/>
        </authorList>
    </citation>
    <scope>FUNCTION</scope>
    <scope>IDENTIFICATION IN GET COMPLEX</scope>
    <scope>INTERACTION WITH CAMLG AND GET3</scope>
</reference>
<feature type="chain" id="PRO_0000065982" description="Guided entry of tail-anchored proteins factor 1">
    <location>
        <begin position="1"/>
        <end position="174"/>
    </location>
</feature>
<feature type="topological domain" description="Lumenal" evidence="3">
    <location>
        <begin position="1"/>
        <end position="8"/>
    </location>
</feature>
<feature type="transmembrane region" description="Helical" evidence="3">
    <location>
        <begin position="9"/>
        <end position="29"/>
    </location>
</feature>
<feature type="topological domain" description="Cytoplasmic" evidence="3">
    <location>
        <begin position="30"/>
        <end position="99"/>
    </location>
</feature>
<feature type="transmembrane region" description="Helical" evidence="3">
    <location>
        <begin position="100"/>
        <end position="120"/>
    </location>
</feature>
<feature type="topological domain" description="Lumenal" evidence="3">
    <location>
        <begin position="121"/>
        <end position="148"/>
    </location>
</feature>
<feature type="transmembrane region" description="Helical" evidence="3">
    <location>
        <begin position="149"/>
        <end position="169"/>
    </location>
</feature>
<feature type="topological domain" description="Cytoplasmic" evidence="3">
    <location>
        <begin position="170"/>
        <end position="174"/>
    </location>
</feature>
<feature type="region of interest" description="Interaction with GET3/TRC40" evidence="1">
    <location>
        <begin position="39"/>
        <end position="97"/>
    </location>
</feature>
<feature type="coiled-coil region" evidence="3">
    <location>
        <begin position="39"/>
        <end position="94"/>
    </location>
</feature>
<comment type="function">
    <text evidence="2 4">Required for the post-translational delivery of tail-anchored (TA) proteins to the endoplasmic reticulum (PubMed:23041287). Together with CAMLG/GET2, acts as a membrane receptor for soluble GET3/TRC40, which recognizes and selectively binds the transmembrane domain of TA proteins in the cytosol (PubMed:23041287). Required to ensure correct topology and ER insertion of CAMLG (By similarity).</text>
</comment>
<comment type="subunit">
    <text evidence="2 4">Component of the Golgi to ER traffic (GET) complex, which is composed of GET1, CAMLG/GET2 and GET3 (PubMed:23041287). Within the complex, GET1 and CAMLG form a heterotetramer which is stabilized by phosphatidylinositol binding and which binds to the GET3 homodimer (By similarity). Interacts with CAMLG/GET2 (via C-terminus) (PubMed:23041287). GET3 shows a higher affinity for CAMLG than for GET1 (By similarity).</text>
</comment>
<comment type="subcellular location">
    <subcellularLocation>
        <location evidence="2">Endoplasmic reticulum membrane</location>
        <topology evidence="3">Multi-pass membrane protein</topology>
    </subcellularLocation>
</comment>
<comment type="similarity">
    <text evidence="5">Belongs to the WRB/GET1 family.</text>
</comment>
<name>GET1_RAT</name>
<gene>
    <name evidence="6" type="primary">Get1</name>
    <name evidence="6" type="synonym">Wrb</name>
</gene>
<sequence>MSASETDRWAWLLVLCFVFGCNVLRILLPTLSSFISRVLQKDAEQESQMRAEIQSMKQELSTVNMMDEFARYARLERKINKMTDKLKTHVKARTAQLAKIKWFISVAFYVLQAALMISLIWKYYSVPVAVVPSKWITPLDRLVAFPTRVAGGIGVTCWILVCNKVVAIILHPFS</sequence>
<organism>
    <name type="scientific">Rattus norvegicus</name>
    <name type="common">Rat</name>
    <dbReference type="NCBI Taxonomy" id="10116"/>
    <lineage>
        <taxon>Eukaryota</taxon>
        <taxon>Metazoa</taxon>
        <taxon>Chordata</taxon>
        <taxon>Craniata</taxon>
        <taxon>Vertebrata</taxon>
        <taxon>Euteleostomi</taxon>
        <taxon>Mammalia</taxon>
        <taxon>Eutheria</taxon>
        <taxon>Euarchontoglires</taxon>
        <taxon>Glires</taxon>
        <taxon>Rodentia</taxon>
        <taxon>Myomorpha</taxon>
        <taxon>Muroidea</taxon>
        <taxon>Muridae</taxon>
        <taxon>Murinae</taxon>
        <taxon>Rattus</taxon>
    </lineage>
</organism>
<keyword id="KW-0175">Coiled coil</keyword>
<keyword id="KW-0256">Endoplasmic reticulum</keyword>
<keyword id="KW-0472">Membrane</keyword>
<keyword id="KW-1185">Reference proteome</keyword>
<keyword id="KW-0812">Transmembrane</keyword>
<keyword id="KW-1133">Transmembrane helix</keyword>
<dbReference type="EMBL" id="BC062049">
    <property type="protein sequence ID" value="AAH62049.1"/>
    <property type="molecule type" value="mRNA"/>
</dbReference>
<dbReference type="RefSeq" id="NP_955405.1">
    <property type="nucleotide sequence ID" value="NM_199373.1"/>
</dbReference>
<dbReference type="SMR" id="Q6P6S5"/>
<dbReference type="FunCoup" id="Q6P6S5">
    <property type="interactions" value="1619"/>
</dbReference>
<dbReference type="STRING" id="10116.ENSRNOP00000002222"/>
<dbReference type="PhosphoSitePlus" id="Q6P6S5"/>
<dbReference type="jPOST" id="Q6P6S5"/>
<dbReference type="PaxDb" id="10116-ENSRNOP00000002222"/>
<dbReference type="Ensembl" id="ENSRNOT00000002222.6">
    <property type="protein sequence ID" value="ENSRNOP00000002222.3"/>
    <property type="gene ID" value="ENSRNOG00000001629.6"/>
</dbReference>
<dbReference type="GeneID" id="288233"/>
<dbReference type="KEGG" id="rno:288233"/>
<dbReference type="UCSC" id="RGD:735104">
    <property type="organism name" value="rat"/>
</dbReference>
<dbReference type="AGR" id="RGD:735104"/>
<dbReference type="CTD" id="7485"/>
<dbReference type="RGD" id="735104">
    <property type="gene designation" value="Get1"/>
</dbReference>
<dbReference type="eggNOG" id="KOG4253">
    <property type="taxonomic scope" value="Eukaryota"/>
</dbReference>
<dbReference type="GeneTree" id="ENSGT01050000248375"/>
<dbReference type="HOGENOM" id="CLU_121992_0_0_1"/>
<dbReference type="InParanoid" id="Q6P6S5"/>
<dbReference type="OrthoDB" id="73143at9989"/>
<dbReference type="PhylomeDB" id="Q6P6S5"/>
<dbReference type="TreeFam" id="TF314708"/>
<dbReference type="PRO" id="PR:Q6P6S5"/>
<dbReference type="Proteomes" id="UP000002494">
    <property type="component" value="Chromosome 11"/>
</dbReference>
<dbReference type="Bgee" id="ENSRNOG00000001629">
    <property type="expression patterns" value="Expressed in heart and 19 other cell types or tissues"/>
</dbReference>
<dbReference type="GO" id="GO:0005789">
    <property type="term" value="C:endoplasmic reticulum membrane"/>
    <property type="evidence" value="ECO:0007669"/>
    <property type="project" value="UniProtKB-SubCell"/>
</dbReference>
<dbReference type="GO" id="GO:0043529">
    <property type="term" value="C:GET complex"/>
    <property type="evidence" value="ECO:0000353"/>
    <property type="project" value="UniProtKB"/>
</dbReference>
<dbReference type="GO" id="GO:0043495">
    <property type="term" value="F:protein-membrane adaptor activity"/>
    <property type="evidence" value="ECO:0000318"/>
    <property type="project" value="GO_Central"/>
</dbReference>
<dbReference type="GO" id="GO:0051649">
    <property type="term" value="P:establishment of localization in cell"/>
    <property type="evidence" value="ECO:0000266"/>
    <property type="project" value="RGD"/>
</dbReference>
<dbReference type="GO" id="GO:0071599">
    <property type="term" value="P:otic vesicle development"/>
    <property type="evidence" value="ECO:0000266"/>
    <property type="project" value="RGD"/>
</dbReference>
<dbReference type="GO" id="GO:0006620">
    <property type="term" value="P:post-translational protein targeting to endoplasmic reticulum membrane"/>
    <property type="evidence" value="ECO:0000266"/>
    <property type="project" value="RGD"/>
</dbReference>
<dbReference type="GO" id="GO:0045048">
    <property type="term" value="P:protein insertion into ER membrane"/>
    <property type="evidence" value="ECO:0000266"/>
    <property type="project" value="RGD"/>
</dbReference>
<dbReference type="GO" id="GO:0050821">
    <property type="term" value="P:protein stabilization"/>
    <property type="evidence" value="ECO:0000250"/>
    <property type="project" value="UniProtKB"/>
</dbReference>
<dbReference type="GO" id="GO:0007605">
    <property type="term" value="P:sensory perception of sound"/>
    <property type="evidence" value="ECO:0000266"/>
    <property type="project" value="RGD"/>
</dbReference>
<dbReference type="GO" id="GO:0050808">
    <property type="term" value="P:synapse organization"/>
    <property type="evidence" value="ECO:0000266"/>
    <property type="project" value="RGD"/>
</dbReference>
<dbReference type="GO" id="GO:0071816">
    <property type="term" value="P:tail-anchored membrane protein insertion into ER membrane"/>
    <property type="evidence" value="ECO:0000314"/>
    <property type="project" value="UniProtKB"/>
</dbReference>
<dbReference type="FunFam" id="1.10.287.660:FF:000004">
    <property type="entry name" value="tail-anchored protein insertion receptor WRB"/>
    <property type="match status" value="1"/>
</dbReference>
<dbReference type="Gene3D" id="1.10.287.660">
    <property type="entry name" value="Helix hairpin bin"/>
    <property type="match status" value="1"/>
</dbReference>
<dbReference type="InterPro" id="IPR028945">
    <property type="entry name" value="Get1"/>
</dbReference>
<dbReference type="InterPro" id="IPR029012">
    <property type="entry name" value="Helix_hairpin_bin_sf"/>
</dbReference>
<dbReference type="PANTHER" id="PTHR42650:SF1">
    <property type="entry name" value="GUIDED ENTRY OF TAIL-ANCHORED PROTEINS FACTOR 1"/>
    <property type="match status" value="1"/>
</dbReference>
<dbReference type="PANTHER" id="PTHR42650">
    <property type="entry name" value="TAIL-ANCHORED PROTEIN INSERTION RECEPTOR WRB"/>
    <property type="match status" value="1"/>
</dbReference>
<dbReference type="Pfam" id="PF04420">
    <property type="entry name" value="CHD5"/>
    <property type="match status" value="1"/>
</dbReference>
<proteinExistence type="evidence at protein level"/>
<accession>Q6P6S5</accession>
<protein>
    <recommendedName>
        <fullName evidence="6">Guided entry of tail-anchored proteins factor 1</fullName>
    </recommendedName>
    <alternativeName>
        <fullName>Tail-anchored protein insertion receptor WRB</fullName>
    </alternativeName>
    <alternativeName>
        <fullName>Tryptophan-rich basic protein</fullName>
    </alternativeName>
</protein>
<evidence type="ECO:0000250" key="1"/>
<evidence type="ECO:0000250" key="2">
    <source>
        <dbReference type="UniProtKB" id="O00258"/>
    </source>
</evidence>
<evidence type="ECO:0000255" key="3"/>
<evidence type="ECO:0000269" key="4">
    <source>
    </source>
</evidence>
<evidence type="ECO:0000305" key="5"/>
<evidence type="ECO:0000312" key="6">
    <source>
        <dbReference type="RGD" id="735104"/>
    </source>
</evidence>